<organism>
    <name type="scientific">Streptococcus mutans serotype c (strain ATCC 700610 / UA159)</name>
    <dbReference type="NCBI Taxonomy" id="210007"/>
    <lineage>
        <taxon>Bacteria</taxon>
        <taxon>Bacillati</taxon>
        <taxon>Bacillota</taxon>
        <taxon>Bacilli</taxon>
        <taxon>Lactobacillales</taxon>
        <taxon>Streptococcaceae</taxon>
        <taxon>Streptococcus</taxon>
    </lineage>
</organism>
<proteinExistence type="inferred from homology"/>
<keyword id="KW-0963">Cytoplasm</keyword>
<keyword id="KW-0274">FAD</keyword>
<keyword id="KW-0285">Flavoprotein</keyword>
<keyword id="KW-0520">NAD</keyword>
<keyword id="KW-1185">Reference proteome</keyword>
<keyword id="KW-0819">tRNA processing</keyword>
<comment type="function">
    <text evidence="1">NAD-binding protein involved in the addition of a carboxymethylaminomethyl (cmnm) group at the wobble position (U34) of certain tRNAs, forming tRNA-cmnm(5)s(2)U34.</text>
</comment>
<comment type="cofactor">
    <cofactor evidence="1">
        <name>FAD</name>
        <dbReference type="ChEBI" id="CHEBI:57692"/>
    </cofactor>
</comment>
<comment type="subunit">
    <text evidence="1">Homodimer. Heterotetramer of two MnmE and two MnmG subunits.</text>
</comment>
<comment type="subcellular location">
    <subcellularLocation>
        <location evidence="1">Cytoplasm</location>
    </subcellularLocation>
</comment>
<comment type="similarity">
    <text evidence="1">Belongs to the MnmG family.</text>
</comment>
<sequence length="631" mass="70435">MTHEFTENYDVIVIGAGHAGVEASLATSRMGCKTLLATINLEMLAFMPCNPSIGGSAKGIVVREIDALGGEMGKNIDKSYIQMRMLNTGKGPAVRALRAQADKALYARNMKHTVEQQENLTLRQSMIDEILVEDGKVIGVRTATNQKYSAQAVIVTTGTALRGEIILGELKYSSGPNNSLASVTLADNLRDLGLEIGRFKTGTPPRVKANSIHYDETEIQPGDKKANHFSFMSKDEDYLKDQIPCWLTYTNQSSHDIINKNLYRAPMFSGIVKGVGPRYCPSIEDKIVRFADKDRHQLFLEPEGRETEEVYIQGLSTSLPEDVQKDVVHSIKGLENAEMMRTGYAIEYDIVLPHQLRATLETKKISGLFTAGQTNGTSGYEEAAGQGIVAGINAALKIQGKPELILKRSDAYIGVMIDDLVTKGTLEPYRLLTSRAEYRLILRHDNADLRLTEIGHQVGLVNEERYMRFQIRKNQFDNELTRLSSIKLKPVAEINKRIEELGFKPLTDALTAKEFMRRPEINYAIATSFVGPAAESLDEKVIELLETEIKYEGYINKALDQVAKMKRMEEKRIPKNIDWDAIDSIATEARQKFKKINPETIGQASRISGVNPADISILMVYLEGKNRSRTR</sequence>
<feature type="chain" id="PRO_0000117186" description="tRNA uridine 5-carboxymethylaminomethyl modification enzyme MnmG">
    <location>
        <begin position="1"/>
        <end position="631"/>
    </location>
</feature>
<feature type="binding site" evidence="1">
    <location>
        <begin position="15"/>
        <end position="20"/>
    </location>
    <ligand>
        <name>FAD</name>
        <dbReference type="ChEBI" id="CHEBI:57692"/>
    </ligand>
</feature>
<feature type="binding site" evidence="1">
    <location>
        <position position="127"/>
    </location>
    <ligand>
        <name>FAD</name>
        <dbReference type="ChEBI" id="CHEBI:57692"/>
    </ligand>
</feature>
<feature type="binding site" evidence="1">
    <location>
        <position position="182"/>
    </location>
    <ligand>
        <name>FAD</name>
        <dbReference type="ChEBI" id="CHEBI:57692"/>
    </ligand>
</feature>
<feature type="binding site" evidence="1">
    <location>
        <begin position="276"/>
        <end position="290"/>
    </location>
    <ligand>
        <name>NAD(+)</name>
        <dbReference type="ChEBI" id="CHEBI:57540"/>
    </ligand>
</feature>
<feature type="binding site" evidence="1">
    <location>
        <position position="373"/>
    </location>
    <ligand>
        <name>FAD</name>
        <dbReference type="ChEBI" id="CHEBI:57692"/>
    </ligand>
</feature>
<gene>
    <name evidence="1" type="primary">mnmG</name>
    <name evidence="1" type="synonym">gidA</name>
    <name type="ordered locus">SMU_2141</name>
</gene>
<name>MNMG_STRMU</name>
<evidence type="ECO:0000255" key="1">
    <source>
        <dbReference type="HAMAP-Rule" id="MF_00129"/>
    </source>
</evidence>
<protein>
    <recommendedName>
        <fullName evidence="1">tRNA uridine 5-carboxymethylaminomethyl modification enzyme MnmG</fullName>
    </recommendedName>
    <alternativeName>
        <fullName evidence="1">Glucose-inhibited division protein A</fullName>
    </alternativeName>
</protein>
<dbReference type="EMBL" id="AE014133">
    <property type="protein sequence ID" value="AAN59732.1"/>
    <property type="molecule type" value="Genomic_DNA"/>
</dbReference>
<dbReference type="RefSeq" id="WP_002262443.1">
    <property type="nucleotide sequence ID" value="NC_004350.2"/>
</dbReference>
<dbReference type="SMR" id="Q8DRS6"/>
<dbReference type="STRING" id="210007.SMU_2141"/>
<dbReference type="KEGG" id="smu:SMU_2141"/>
<dbReference type="eggNOG" id="COG0445">
    <property type="taxonomic scope" value="Bacteria"/>
</dbReference>
<dbReference type="HOGENOM" id="CLU_007831_2_2_9"/>
<dbReference type="PhylomeDB" id="Q8DRS6"/>
<dbReference type="Proteomes" id="UP000002512">
    <property type="component" value="Chromosome"/>
</dbReference>
<dbReference type="GO" id="GO:0005829">
    <property type="term" value="C:cytosol"/>
    <property type="evidence" value="ECO:0007669"/>
    <property type="project" value="TreeGrafter"/>
</dbReference>
<dbReference type="GO" id="GO:0050660">
    <property type="term" value="F:flavin adenine dinucleotide binding"/>
    <property type="evidence" value="ECO:0007669"/>
    <property type="project" value="UniProtKB-UniRule"/>
</dbReference>
<dbReference type="GO" id="GO:0030488">
    <property type="term" value="P:tRNA methylation"/>
    <property type="evidence" value="ECO:0007669"/>
    <property type="project" value="TreeGrafter"/>
</dbReference>
<dbReference type="GO" id="GO:0002098">
    <property type="term" value="P:tRNA wobble uridine modification"/>
    <property type="evidence" value="ECO:0007669"/>
    <property type="project" value="InterPro"/>
</dbReference>
<dbReference type="FunFam" id="1.10.10.1800:FF:000001">
    <property type="entry name" value="tRNA uridine 5-carboxymethylaminomethyl modification enzyme MnmG"/>
    <property type="match status" value="1"/>
</dbReference>
<dbReference type="FunFam" id="1.10.150.570:FF:000001">
    <property type="entry name" value="tRNA uridine 5-carboxymethylaminomethyl modification enzyme MnmG"/>
    <property type="match status" value="1"/>
</dbReference>
<dbReference type="FunFam" id="3.50.50.60:FF:000002">
    <property type="entry name" value="tRNA uridine 5-carboxymethylaminomethyl modification enzyme MnmG"/>
    <property type="match status" value="1"/>
</dbReference>
<dbReference type="FunFam" id="3.50.50.60:FF:000063">
    <property type="entry name" value="tRNA uridine 5-carboxymethylaminomethyl modification enzyme MnmG"/>
    <property type="match status" value="1"/>
</dbReference>
<dbReference type="Gene3D" id="3.50.50.60">
    <property type="entry name" value="FAD/NAD(P)-binding domain"/>
    <property type="match status" value="2"/>
</dbReference>
<dbReference type="Gene3D" id="1.10.150.570">
    <property type="entry name" value="GidA associated domain, C-terminal subdomain"/>
    <property type="match status" value="1"/>
</dbReference>
<dbReference type="Gene3D" id="1.10.10.1800">
    <property type="entry name" value="tRNA uridine 5-carboxymethylaminomethyl modification enzyme MnmG/GidA"/>
    <property type="match status" value="1"/>
</dbReference>
<dbReference type="HAMAP" id="MF_00129">
    <property type="entry name" value="MnmG_GidA"/>
    <property type="match status" value="1"/>
</dbReference>
<dbReference type="InterPro" id="IPR036188">
    <property type="entry name" value="FAD/NAD-bd_sf"/>
</dbReference>
<dbReference type="InterPro" id="IPR049312">
    <property type="entry name" value="GIDA_C_N"/>
</dbReference>
<dbReference type="InterPro" id="IPR004416">
    <property type="entry name" value="MnmG"/>
</dbReference>
<dbReference type="InterPro" id="IPR002218">
    <property type="entry name" value="MnmG-rel"/>
</dbReference>
<dbReference type="InterPro" id="IPR020595">
    <property type="entry name" value="MnmG-rel_CS"/>
</dbReference>
<dbReference type="InterPro" id="IPR026904">
    <property type="entry name" value="MnmG_C"/>
</dbReference>
<dbReference type="InterPro" id="IPR047001">
    <property type="entry name" value="MnmG_C_subdom"/>
</dbReference>
<dbReference type="InterPro" id="IPR044920">
    <property type="entry name" value="MnmG_C_subdom_sf"/>
</dbReference>
<dbReference type="InterPro" id="IPR040131">
    <property type="entry name" value="MnmG_N"/>
</dbReference>
<dbReference type="NCBIfam" id="TIGR00136">
    <property type="entry name" value="mnmG_gidA"/>
    <property type="match status" value="1"/>
</dbReference>
<dbReference type="PANTHER" id="PTHR11806">
    <property type="entry name" value="GLUCOSE INHIBITED DIVISION PROTEIN A"/>
    <property type="match status" value="1"/>
</dbReference>
<dbReference type="PANTHER" id="PTHR11806:SF0">
    <property type="entry name" value="PROTEIN MTO1 HOMOLOG, MITOCHONDRIAL"/>
    <property type="match status" value="1"/>
</dbReference>
<dbReference type="Pfam" id="PF01134">
    <property type="entry name" value="GIDA"/>
    <property type="match status" value="1"/>
</dbReference>
<dbReference type="Pfam" id="PF21680">
    <property type="entry name" value="GIDA_C_1st"/>
    <property type="match status" value="1"/>
</dbReference>
<dbReference type="Pfam" id="PF13932">
    <property type="entry name" value="SAM_GIDA_C"/>
    <property type="match status" value="1"/>
</dbReference>
<dbReference type="PRINTS" id="PR00411">
    <property type="entry name" value="PNDRDTASEI"/>
</dbReference>
<dbReference type="SMART" id="SM01228">
    <property type="entry name" value="GIDA_assoc_3"/>
    <property type="match status" value="1"/>
</dbReference>
<dbReference type="SUPFAM" id="SSF51905">
    <property type="entry name" value="FAD/NAD(P)-binding domain"/>
    <property type="match status" value="1"/>
</dbReference>
<dbReference type="PROSITE" id="PS01280">
    <property type="entry name" value="GIDA_1"/>
    <property type="match status" value="1"/>
</dbReference>
<dbReference type="PROSITE" id="PS01281">
    <property type="entry name" value="GIDA_2"/>
    <property type="match status" value="1"/>
</dbReference>
<reference key="1">
    <citation type="journal article" date="2002" name="Proc. Natl. Acad. Sci. U.S.A.">
        <title>Genome sequence of Streptococcus mutans UA159, a cariogenic dental pathogen.</title>
        <authorList>
            <person name="Ajdic D.J."/>
            <person name="McShan W.M."/>
            <person name="McLaughlin R.E."/>
            <person name="Savic G."/>
            <person name="Chang J."/>
            <person name="Carson M.B."/>
            <person name="Primeaux C."/>
            <person name="Tian R."/>
            <person name="Kenton S."/>
            <person name="Jia H.G."/>
            <person name="Lin S.P."/>
            <person name="Qian Y."/>
            <person name="Li S."/>
            <person name="Zhu H."/>
            <person name="Najar F.Z."/>
            <person name="Lai H."/>
            <person name="White J."/>
            <person name="Roe B.A."/>
            <person name="Ferretti J.J."/>
        </authorList>
    </citation>
    <scope>NUCLEOTIDE SEQUENCE [LARGE SCALE GENOMIC DNA]</scope>
    <source>
        <strain>ATCC 700610 / UA159</strain>
    </source>
</reference>
<accession>Q8DRS6</accession>